<organism>
    <name type="scientific">Psychrobacter cryohalolentis (strain ATCC BAA-1226 / DSM 17306 / VKM B-2378 / K5)</name>
    <dbReference type="NCBI Taxonomy" id="335284"/>
    <lineage>
        <taxon>Bacteria</taxon>
        <taxon>Pseudomonadati</taxon>
        <taxon>Pseudomonadota</taxon>
        <taxon>Gammaproteobacteria</taxon>
        <taxon>Moraxellales</taxon>
        <taxon>Moraxellaceae</taxon>
        <taxon>Psychrobacter</taxon>
    </lineage>
</organism>
<comment type="function">
    <text evidence="1">NQR complex catalyzes the reduction of ubiquinone-1 to ubiquinol by two successive reactions, coupled with the transport of Na(+) ions from the cytoplasm to the periplasm. The first step is catalyzed by NqrF, which accepts electrons from NADH and reduces ubiquinone-1 to ubisemiquinone by a one-electron transfer pathway.</text>
</comment>
<comment type="catalytic activity">
    <reaction evidence="1">
        <text>a ubiquinone + n Na(+)(in) + NADH + H(+) = a ubiquinol + n Na(+)(out) + NAD(+)</text>
        <dbReference type="Rhea" id="RHEA:47748"/>
        <dbReference type="Rhea" id="RHEA-COMP:9565"/>
        <dbReference type="Rhea" id="RHEA-COMP:9566"/>
        <dbReference type="ChEBI" id="CHEBI:15378"/>
        <dbReference type="ChEBI" id="CHEBI:16389"/>
        <dbReference type="ChEBI" id="CHEBI:17976"/>
        <dbReference type="ChEBI" id="CHEBI:29101"/>
        <dbReference type="ChEBI" id="CHEBI:57540"/>
        <dbReference type="ChEBI" id="CHEBI:57945"/>
        <dbReference type="EC" id="7.2.1.1"/>
    </reaction>
</comment>
<comment type="cofactor">
    <cofactor evidence="1">
        <name>[2Fe-2S] cluster</name>
        <dbReference type="ChEBI" id="CHEBI:190135"/>
    </cofactor>
    <text evidence="1">Binds 1 [2Fe-2S] cluster.</text>
</comment>
<comment type="cofactor">
    <cofactor evidence="1">
        <name>FAD</name>
        <dbReference type="ChEBI" id="CHEBI:57692"/>
    </cofactor>
</comment>
<comment type="subunit">
    <text evidence="1">Composed of six subunits; NqrA, NqrB, NqrC, NqrD, NqrE and NqrF.</text>
</comment>
<comment type="subcellular location">
    <subcellularLocation>
        <location evidence="1">Cell inner membrane</location>
        <topology evidence="1">Single-pass membrane protein</topology>
    </subcellularLocation>
</comment>
<comment type="similarity">
    <text evidence="1">Belongs to the NqrF family.</text>
</comment>
<feature type="chain" id="PRO_1000080592" description="Na(+)-translocating NADH-quinone reductase subunit F">
    <location>
        <begin position="1"/>
        <end position="411"/>
    </location>
</feature>
<feature type="transmembrane region" description="Helical" evidence="1">
    <location>
        <begin position="6"/>
        <end position="26"/>
    </location>
</feature>
<feature type="domain" description="2Fe-2S ferredoxin-type" evidence="1">
    <location>
        <begin position="35"/>
        <end position="129"/>
    </location>
</feature>
<feature type="domain" description="FAD-binding FR-type" evidence="1">
    <location>
        <begin position="132"/>
        <end position="273"/>
    </location>
</feature>
<feature type="binding site" evidence="1">
    <location>
        <position position="72"/>
    </location>
    <ligand>
        <name>[2Fe-2S] cluster</name>
        <dbReference type="ChEBI" id="CHEBI:190135"/>
    </ligand>
</feature>
<feature type="binding site" evidence="1">
    <location>
        <position position="78"/>
    </location>
    <ligand>
        <name>[2Fe-2S] cluster</name>
        <dbReference type="ChEBI" id="CHEBI:190135"/>
    </ligand>
</feature>
<feature type="binding site" evidence="1">
    <location>
        <position position="81"/>
    </location>
    <ligand>
        <name>[2Fe-2S] cluster</name>
        <dbReference type="ChEBI" id="CHEBI:190135"/>
    </ligand>
</feature>
<feature type="binding site" evidence="1">
    <location>
        <position position="113"/>
    </location>
    <ligand>
        <name>[2Fe-2S] cluster</name>
        <dbReference type="ChEBI" id="CHEBI:190135"/>
    </ligand>
</feature>
<dbReference type="EC" id="7.2.1.1" evidence="1"/>
<dbReference type="EMBL" id="CP000323">
    <property type="protein sequence ID" value="ABE76206.1"/>
    <property type="molecule type" value="Genomic_DNA"/>
</dbReference>
<dbReference type="RefSeq" id="WP_011514729.1">
    <property type="nucleotide sequence ID" value="NC_007969.1"/>
</dbReference>
<dbReference type="SMR" id="Q1Q7Z7"/>
<dbReference type="STRING" id="335284.Pcryo_2429"/>
<dbReference type="KEGG" id="pcr:Pcryo_2429"/>
<dbReference type="eggNOG" id="COG2871">
    <property type="taxonomic scope" value="Bacteria"/>
</dbReference>
<dbReference type="HOGENOM" id="CLU_003827_7_2_6"/>
<dbReference type="Proteomes" id="UP000002425">
    <property type="component" value="Chromosome"/>
</dbReference>
<dbReference type="GO" id="GO:0005886">
    <property type="term" value="C:plasma membrane"/>
    <property type="evidence" value="ECO:0007669"/>
    <property type="project" value="UniProtKB-SubCell"/>
</dbReference>
<dbReference type="GO" id="GO:0051537">
    <property type="term" value="F:2 iron, 2 sulfur cluster binding"/>
    <property type="evidence" value="ECO:0007669"/>
    <property type="project" value="UniProtKB-KW"/>
</dbReference>
<dbReference type="GO" id="GO:0009055">
    <property type="term" value="F:electron transfer activity"/>
    <property type="evidence" value="ECO:0007669"/>
    <property type="project" value="UniProtKB-UniRule"/>
</dbReference>
<dbReference type="GO" id="GO:0046872">
    <property type="term" value="F:metal ion binding"/>
    <property type="evidence" value="ECO:0007669"/>
    <property type="project" value="UniProtKB-KW"/>
</dbReference>
<dbReference type="GO" id="GO:0016655">
    <property type="term" value="F:oxidoreductase activity, acting on NAD(P)H, quinone or similar compound as acceptor"/>
    <property type="evidence" value="ECO:0007669"/>
    <property type="project" value="InterPro"/>
</dbReference>
<dbReference type="GO" id="GO:0006814">
    <property type="term" value="P:sodium ion transport"/>
    <property type="evidence" value="ECO:0007669"/>
    <property type="project" value="UniProtKB-UniRule"/>
</dbReference>
<dbReference type="CDD" id="cd00207">
    <property type="entry name" value="fer2"/>
    <property type="match status" value="1"/>
</dbReference>
<dbReference type="CDD" id="cd06188">
    <property type="entry name" value="NADH_quinone_reductase"/>
    <property type="match status" value="1"/>
</dbReference>
<dbReference type="FunFam" id="3.40.50.80:FF:000014">
    <property type="entry name" value="Na(+)-translocating NADH-quinone reductase subunit F"/>
    <property type="match status" value="1"/>
</dbReference>
<dbReference type="Gene3D" id="3.10.20.30">
    <property type="match status" value="1"/>
</dbReference>
<dbReference type="Gene3D" id="3.40.50.80">
    <property type="entry name" value="Nucleotide-binding domain of ferredoxin-NADP reductase (FNR) module"/>
    <property type="match status" value="1"/>
</dbReference>
<dbReference type="Gene3D" id="2.40.30.10">
    <property type="entry name" value="Translation factors"/>
    <property type="match status" value="1"/>
</dbReference>
<dbReference type="HAMAP" id="MF_00430">
    <property type="entry name" value="NqrF"/>
    <property type="match status" value="1"/>
</dbReference>
<dbReference type="InterPro" id="IPR036010">
    <property type="entry name" value="2Fe-2S_ferredoxin-like_sf"/>
</dbReference>
<dbReference type="InterPro" id="IPR001041">
    <property type="entry name" value="2Fe-2S_ferredoxin-type"/>
</dbReference>
<dbReference type="InterPro" id="IPR012675">
    <property type="entry name" value="Beta-grasp_dom_sf"/>
</dbReference>
<dbReference type="InterPro" id="IPR008333">
    <property type="entry name" value="Cbr1-like_FAD-bd_dom"/>
</dbReference>
<dbReference type="InterPro" id="IPR017927">
    <property type="entry name" value="FAD-bd_FR_type"/>
</dbReference>
<dbReference type="InterPro" id="IPR039261">
    <property type="entry name" value="FNR_nucleotide-bd"/>
</dbReference>
<dbReference type="InterPro" id="IPR010205">
    <property type="entry name" value="NqrF"/>
</dbReference>
<dbReference type="InterPro" id="IPR001433">
    <property type="entry name" value="OxRdtase_FAD/NAD-bd"/>
</dbReference>
<dbReference type="InterPro" id="IPR017938">
    <property type="entry name" value="Riboflavin_synthase-like_b-brl"/>
</dbReference>
<dbReference type="NCBIfam" id="TIGR01941">
    <property type="entry name" value="nqrF"/>
    <property type="match status" value="1"/>
</dbReference>
<dbReference type="PANTHER" id="PTHR43644">
    <property type="entry name" value="NA(+)-TRANSLOCATING NADH-QUINONE REDUCTASE SUBUNIT"/>
    <property type="match status" value="1"/>
</dbReference>
<dbReference type="PANTHER" id="PTHR43644:SF1">
    <property type="entry name" value="NAD(P)H-FLAVIN REDUCTASE"/>
    <property type="match status" value="1"/>
</dbReference>
<dbReference type="Pfam" id="PF00970">
    <property type="entry name" value="FAD_binding_6"/>
    <property type="match status" value="1"/>
</dbReference>
<dbReference type="Pfam" id="PF00111">
    <property type="entry name" value="Fer2"/>
    <property type="match status" value="1"/>
</dbReference>
<dbReference type="Pfam" id="PF00175">
    <property type="entry name" value="NAD_binding_1"/>
    <property type="match status" value="1"/>
</dbReference>
<dbReference type="PIRSF" id="PIRSF000044">
    <property type="entry name" value="Cis_Diol_DH_RD"/>
    <property type="match status" value="1"/>
</dbReference>
<dbReference type="SUPFAM" id="SSF54292">
    <property type="entry name" value="2Fe-2S ferredoxin-like"/>
    <property type="match status" value="1"/>
</dbReference>
<dbReference type="SUPFAM" id="SSF52343">
    <property type="entry name" value="Ferredoxin reductase-like, C-terminal NADP-linked domain"/>
    <property type="match status" value="1"/>
</dbReference>
<dbReference type="SUPFAM" id="SSF63380">
    <property type="entry name" value="Riboflavin synthase domain-like"/>
    <property type="match status" value="1"/>
</dbReference>
<dbReference type="PROSITE" id="PS51085">
    <property type="entry name" value="2FE2S_FER_2"/>
    <property type="match status" value="1"/>
</dbReference>
<dbReference type="PROSITE" id="PS51384">
    <property type="entry name" value="FAD_FR"/>
    <property type="match status" value="1"/>
</dbReference>
<protein>
    <recommendedName>
        <fullName evidence="1">Na(+)-translocating NADH-quinone reductase subunit F</fullName>
        <shortName evidence="1">Na(+)-NQR subunit F</shortName>
        <shortName evidence="1">Na(+)-translocating NQR subunit F</shortName>
        <ecNumber evidence="1">7.2.1.1</ecNumber>
    </recommendedName>
    <alternativeName>
        <fullName evidence="1">NQR complex subunit F</fullName>
    </alternativeName>
    <alternativeName>
        <fullName evidence="1">NQR-1 subunit F</fullName>
    </alternativeName>
</protein>
<name>NQRF_PSYCK</name>
<accession>Q1Q7Z7</accession>
<keyword id="KW-0001">2Fe-2S</keyword>
<keyword id="KW-0997">Cell inner membrane</keyword>
<keyword id="KW-1003">Cell membrane</keyword>
<keyword id="KW-0274">FAD</keyword>
<keyword id="KW-0285">Flavoprotein</keyword>
<keyword id="KW-0406">Ion transport</keyword>
<keyword id="KW-0408">Iron</keyword>
<keyword id="KW-0411">Iron-sulfur</keyword>
<keyword id="KW-0472">Membrane</keyword>
<keyword id="KW-0479">Metal-binding</keyword>
<keyword id="KW-0520">NAD</keyword>
<keyword id="KW-0915">Sodium</keyword>
<keyword id="KW-0739">Sodium transport</keyword>
<keyword id="KW-1278">Translocase</keyword>
<keyword id="KW-0812">Transmembrane</keyword>
<keyword id="KW-1133">Transmembrane helix</keyword>
<keyword id="KW-0813">Transport</keyword>
<keyword id="KW-0830">Ubiquinone</keyword>
<evidence type="ECO:0000255" key="1">
    <source>
        <dbReference type="HAMAP-Rule" id="MF_00430"/>
    </source>
</evidence>
<gene>
    <name evidence="1" type="primary">nqrF</name>
    <name type="ordered locus">Pcryo_2429</name>
</gene>
<proteinExistence type="inferred from homology"/>
<sequence>MDYATAIGGVAMFTLIIMGLVAIILAARSRLVSSGDVTIHINDNPENDVVTPAGGKLLQTLASEGIFLSSACGGGGTCAQCRCRVIEGGGSILPTEEGYFTQGEIRNHMRLACQVAVKQDMKIEIDPEFFDVQKWECEVISNDNVATFIKELVLKIPDGEEVNFRAGGYVQLEAPPHEVHYKDFDIAEEYQDDWNNFGIFKYVSKVDEPVIRAYSMANYPDEKGLIKFNIRIASPPPRGPDGIPPGKMSSWTFSLKPGDKVTVSGPYGEFFAKKTEAEMIFVGGGAGMAPMRSHIFDQLKRLNSDRKISFWYGARSIREMFYVEDYDQLEEEFANFEWHVALSDPLPEDNWDGYTGFIHNVLLEEYLKDHPNPEDCEYYMCGPPMMNAAVIDMLHSMGVEDENIMLDDFGG</sequence>
<reference key="1">
    <citation type="submission" date="2006-03" db="EMBL/GenBank/DDBJ databases">
        <title>Complete sequence of chromosome of Psychrobacter cryohalolentis K5.</title>
        <authorList>
            <consortium name="US DOE Joint Genome Institute"/>
            <person name="Copeland A."/>
            <person name="Lucas S."/>
            <person name="Lapidus A."/>
            <person name="Barry K."/>
            <person name="Detter J.C."/>
            <person name="Glavina T."/>
            <person name="Hammon N."/>
            <person name="Israni S."/>
            <person name="Dalin E."/>
            <person name="Tice H."/>
            <person name="Pitluck S."/>
            <person name="Brettin T."/>
            <person name="Bruce D."/>
            <person name="Han C."/>
            <person name="Tapia R."/>
            <person name="Sims D.R."/>
            <person name="Gilna P."/>
            <person name="Schmutz J."/>
            <person name="Larimer F."/>
            <person name="Land M."/>
            <person name="Hauser L."/>
            <person name="Kyrpides N."/>
            <person name="Kim E."/>
            <person name="Richardson P."/>
        </authorList>
    </citation>
    <scope>NUCLEOTIDE SEQUENCE [LARGE SCALE GENOMIC DNA]</scope>
    <source>
        <strain>ATCC BAA-1226 / DSM 17306 / VKM B-2378 / K5</strain>
    </source>
</reference>